<organism>
    <name type="scientific">Ehrlichia ruminantium (strain Gardel)</name>
    <dbReference type="NCBI Taxonomy" id="302409"/>
    <lineage>
        <taxon>Bacteria</taxon>
        <taxon>Pseudomonadati</taxon>
        <taxon>Pseudomonadota</taxon>
        <taxon>Alphaproteobacteria</taxon>
        <taxon>Rickettsiales</taxon>
        <taxon>Anaplasmataceae</taxon>
        <taxon>Ehrlichia</taxon>
    </lineage>
</organism>
<dbReference type="EC" id="2.7.7.6" evidence="1"/>
<dbReference type="EMBL" id="CR925677">
    <property type="protein sequence ID" value="CAI28058.1"/>
    <property type="molecule type" value="Genomic_DNA"/>
</dbReference>
<dbReference type="RefSeq" id="WP_011255711.1">
    <property type="nucleotide sequence ID" value="NC_006831.1"/>
</dbReference>
<dbReference type="SMR" id="Q5FFS1"/>
<dbReference type="KEGG" id="erg:ERGA_CDS_06060"/>
<dbReference type="HOGENOM" id="CLU_053084_0_0_5"/>
<dbReference type="OrthoDB" id="9805706at2"/>
<dbReference type="Proteomes" id="UP000000533">
    <property type="component" value="Chromosome"/>
</dbReference>
<dbReference type="GO" id="GO:0005737">
    <property type="term" value="C:cytoplasm"/>
    <property type="evidence" value="ECO:0007669"/>
    <property type="project" value="UniProtKB-ARBA"/>
</dbReference>
<dbReference type="GO" id="GO:0000428">
    <property type="term" value="C:DNA-directed RNA polymerase complex"/>
    <property type="evidence" value="ECO:0007669"/>
    <property type="project" value="UniProtKB-KW"/>
</dbReference>
<dbReference type="GO" id="GO:0003677">
    <property type="term" value="F:DNA binding"/>
    <property type="evidence" value="ECO:0007669"/>
    <property type="project" value="UniProtKB-UniRule"/>
</dbReference>
<dbReference type="GO" id="GO:0003899">
    <property type="term" value="F:DNA-directed RNA polymerase activity"/>
    <property type="evidence" value="ECO:0007669"/>
    <property type="project" value="UniProtKB-UniRule"/>
</dbReference>
<dbReference type="GO" id="GO:0046983">
    <property type="term" value="F:protein dimerization activity"/>
    <property type="evidence" value="ECO:0007669"/>
    <property type="project" value="InterPro"/>
</dbReference>
<dbReference type="GO" id="GO:0006351">
    <property type="term" value="P:DNA-templated transcription"/>
    <property type="evidence" value="ECO:0007669"/>
    <property type="project" value="UniProtKB-UniRule"/>
</dbReference>
<dbReference type="CDD" id="cd06928">
    <property type="entry name" value="RNAP_alpha_NTD"/>
    <property type="match status" value="1"/>
</dbReference>
<dbReference type="FunFam" id="1.10.150.20:FF:000001">
    <property type="entry name" value="DNA-directed RNA polymerase subunit alpha"/>
    <property type="match status" value="1"/>
</dbReference>
<dbReference type="FunFam" id="2.170.120.12:FF:000001">
    <property type="entry name" value="DNA-directed RNA polymerase subunit alpha"/>
    <property type="match status" value="1"/>
</dbReference>
<dbReference type="Gene3D" id="1.10.150.20">
    <property type="entry name" value="5' to 3' exonuclease, C-terminal subdomain"/>
    <property type="match status" value="1"/>
</dbReference>
<dbReference type="Gene3D" id="2.170.120.12">
    <property type="entry name" value="DNA-directed RNA polymerase, insert domain"/>
    <property type="match status" value="1"/>
</dbReference>
<dbReference type="Gene3D" id="3.30.1360.10">
    <property type="entry name" value="RNA polymerase, RBP11-like subunit"/>
    <property type="match status" value="1"/>
</dbReference>
<dbReference type="HAMAP" id="MF_00059">
    <property type="entry name" value="RNApol_bact_RpoA"/>
    <property type="match status" value="1"/>
</dbReference>
<dbReference type="InterPro" id="IPR011262">
    <property type="entry name" value="DNA-dir_RNA_pol_insert"/>
</dbReference>
<dbReference type="InterPro" id="IPR011263">
    <property type="entry name" value="DNA-dir_RNA_pol_RpoA/D/Rpb3"/>
</dbReference>
<dbReference type="InterPro" id="IPR011773">
    <property type="entry name" value="DNA-dir_RpoA"/>
</dbReference>
<dbReference type="InterPro" id="IPR036603">
    <property type="entry name" value="RBP11-like"/>
</dbReference>
<dbReference type="InterPro" id="IPR011260">
    <property type="entry name" value="RNAP_asu_C"/>
</dbReference>
<dbReference type="InterPro" id="IPR036643">
    <property type="entry name" value="RNApol_insert_sf"/>
</dbReference>
<dbReference type="NCBIfam" id="NF003513">
    <property type="entry name" value="PRK05182.1-2"/>
    <property type="match status" value="1"/>
</dbReference>
<dbReference type="NCBIfam" id="NF003519">
    <property type="entry name" value="PRK05182.2-5"/>
    <property type="match status" value="1"/>
</dbReference>
<dbReference type="NCBIfam" id="TIGR02027">
    <property type="entry name" value="rpoA"/>
    <property type="match status" value="1"/>
</dbReference>
<dbReference type="Pfam" id="PF01000">
    <property type="entry name" value="RNA_pol_A_bac"/>
    <property type="match status" value="1"/>
</dbReference>
<dbReference type="Pfam" id="PF03118">
    <property type="entry name" value="RNA_pol_A_CTD"/>
    <property type="match status" value="1"/>
</dbReference>
<dbReference type="Pfam" id="PF01193">
    <property type="entry name" value="RNA_pol_L"/>
    <property type="match status" value="1"/>
</dbReference>
<dbReference type="SMART" id="SM00662">
    <property type="entry name" value="RPOLD"/>
    <property type="match status" value="1"/>
</dbReference>
<dbReference type="SUPFAM" id="SSF47789">
    <property type="entry name" value="C-terminal domain of RNA polymerase alpha subunit"/>
    <property type="match status" value="1"/>
</dbReference>
<dbReference type="SUPFAM" id="SSF56553">
    <property type="entry name" value="Insert subdomain of RNA polymerase alpha subunit"/>
    <property type="match status" value="1"/>
</dbReference>
<dbReference type="SUPFAM" id="SSF55257">
    <property type="entry name" value="RBP11-like subunits of RNA polymerase"/>
    <property type="match status" value="1"/>
</dbReference>
<reference key="1">
    <citation type="journal article" date="2006" name="J. Bacteriol.">
        <title>Comparative genomic analysis of three strains of Ehrlichia ruminantium reveals an active process of genome size plasticity.</title>
        <authorList>
            <person name="Frutos R."/>
            <person name="Viari A."/>
            <person name="Ferraz C."/>
            <person name="Morgat A."/>
            <person name="Eychenie S."/>
            <person name="Kandassamy Y."/>
            <person name="Chantal I."/>
            <person name="Bensaid A."/>
            <person name="Coissac E."/>
            <person name="Vachiery N."/>
            <person name="Demaille J."/>
            <person name="Martinez D."/>
        </authorList>
    </citation>
    <scope>NUCLEOTIDE SEQUENCE [LARGE SCALE GENOMIC DNA]</scope>
    <source>
        <strain>Gardel</strain>
    </source>
</reference>
<name>RPOA_EHRRG</name>
<proteinExistence type="inferred from homology"/>
<accession>Q5FFS1</accession>
<comment type="function">
    <text evidence="1">DNA-dependent RNA polymerase catalyzes the transcription of DNA into RNA using the four ribonucleoside triphosphates as substrates.</text>
</comment>
<comment type="catalytic activity">
    <reaction evidence="1">
        <text>RNA(n) + a ribonucleoside 5'-triphosphate = RNA(n+1) + diphosphate</text>
        <dbReference type="Rhea" id="RHEA:21248"/>
        <dbReference type="Rhea" id="RHEA-COMP:14527"/>
        <dbReference type="Rhea" id="RHEA-COMP:17342"/>
        <dbReference type="ChEBI" id="CHEBI:33019"/>
        <dbReference type="ChEBI" id="CHEBI:61557"/>
        <dbReference type="ChEBI" id="CHEBI:140395"/>
        <dbReference type="EC" id="2.7.7.6"/>
    </reaction>
</comment>
<comment type="subunit">
    <text evidence="1">Homodimer. The RNAP catalytic core consists of 2 alpha, 1 beta, 1 beta' and 1 omega subunit. When a sigma factor is associated with the core the holoenzyme is formed, which can initiate transcription.</text>
</comment>
<comment type="domain">
    <text evidence="1">The N-terminal domain is essential for RNAP assembly and basal transcription, whereas the C-terminal domain is involved in interaction with transcriptional regulators and with upstream promoter elements.</text>
</comment>
<comment type="similarity">
    <text evidence="1">Belongs to the RNA polymerase alpha chain family.</text>
</comment>
<evidence type="ECO:0000255" key="1">
    <source>
        <dbReference type="HAMAP-Rule" id="MF_00059"/>
    </source>
</evidence>
<protein>
    <recommendedName>
        <fullName evidence="1">DNA-directed RNA polymerase subunit alpha</fullName>
        <shortName evidence="1">RNAP subunit alpha</shortName>
        <ecNumber evidence="1">2.7.7.6</ecNumber>
    </recommendedName>
    <alternativeName>
        <fullName evidence="1">RNA polymerase subunit alpha</fullName>
    </alternativeName>
    <alternativeName>
        <fullName evidence="1">Transcriptase subunit alpha</fullName>
    </alternativeName>
</protein>
<sequence>MIFDEDSSSVAQESGYMGVGSPYSSDVGRISMSDHWNKLTKPSSIKVVNHGNALNKADLIIEPLESGFALTLGNALRRVMMSSLRGFAVYGVEIENVLHEFTSISGVREDVTDILLNISMIRLKLSGMDNKVLSLKVKGPCEVRSGMIADTPDCTILNKDLLICTLDQDVDFNIKMYVNSGKGYVPAVKRKSINKFGLSDVPVNFIATNALYSPIKKASFRVESSRIGQFTDYDRLIMSVETDHSILPDEAVALAARILQDQFQQFINFDETDEPHQKVDTKDVLPYDSNLLRKVDELELSVRSYNCLKNDNITYIGDLVQKTESDMLRTPNFGRKSLNEINELLASMNLHLGMKIANWPPESIESLSKQYSEE</sequence>
<feature type="chain" id="PRO_0000225274" description="DNA-directed RNA polymerase subunit alpha">
    <location>
        <begin position="1"/>
        <end position="374"/>
    </location>
</feature>
<feature type="region of interest" description="Alpha N-terminal domain (alpha-NTD)" evidence="1">
    <location>
        <begin position="1"/>
        <end position="270"/>
    </location>
</feature>
<feature type="region of interest" description="Alpha C-terminal domain (alpha-CTD)" evidence="1">
    <location>
        <begin position="282"/>
        <end position="374"/>
    </location>
</feature>
<keyword id="KW-0240">DNA-directed RNA polymerase</keyword>
<keyword id="KW-0548">Nucleotidyltransferase</keyword>
<keyword id="KW-0804">Transcription</keyword>
<keyword id="KW-0808">Transferase</keyword>
<gene>
    <name evidence="1" type="primary">rpoA</name>
    <name type="ordered locus">ERGA_CDS_06060</name>
</gene>